<evidence type="ECO:0000255" key="1"/>
<evidence type="ECO:0000305" key="2"/>
<sequence>MMKKPVVIELAVVVLAAVVAGGYWWYQSRQDNGLTLYGNVDIRTVNLSFRVGGRVESLAVDEGDAIKAGQVLGELDHKPYEIALMQAKAGVSVAQAQYDLMLAGYRDEEIAQAAAAVKQAQAAYDYAQNFYNRQQGLWKSRTISANDLENARSSRDQAQATLKSAQDKLRQYRSGNREQDIAQAKASLEQAQAQLAQAELNLQDSTLIAPSDGTLLTRAVEPGTVLNEGGTVFTVSLTRPVWVRAYVDERYLDQAQPGRKVLLYTDGRPDKPYHGQIGFVSPTAEFTPKTVETPDLRTDLVYRLRIVVTDADDALRQGMPVTVQFGNEAGHE</sequence>
<dbReference type="EMBL" id="CP000038">
    <property type="protein sequence ID" value="AAZ87522.1"/>
    <property type="molecule type" value="Genomic_DNA"/>
</dbReference>
<dbReference type="SMR" id="Q3Z3Z0"/>
<dbReference type="KEGG" id="ssn:SSON_0774"/>
<dbReference type="HOGENOM" id="CLU_018816_6_3_6"/>
<dbReference type="Proteomes" id="UP000002529">
    <property type="component" value="Chromosome"/>
</dbReference>
<dbReference type="GO" id="GO:0042597">
    <property type="term" value="C:periplasmic space"/>
    <property type="evidence" value="ECO:0007669"/>
    <property type="project" value="UniProtKB-SubCell"/>
</dbReference>
<dbReference type="FunFam" id="1.10.287.470:FF:000004">
    <property type="entry name" value="UPF0194 membrane protein YbhG"/>
    <property type="match status" value="1"/>
</dbReference>
<dbReference type="FunFam" id="2.40.50.100:FF:000025">
    <property type="entry name" value="UPF0194 membrane protein YbhG"/>
    <property type="match status" value="1"/>
</dbReference>
<dbReference type="Gene3D" id="2.40.30.170">
    <property type="match status" value="1"/>
</dbReference>
<dbReference type="Gene3D" id="2.40.50.100">
    <property type="match status" value="2"/>
</dbReference>
<dbReference type="Gene3D" id="1.10.287.470">
    <property type="entry name" value="Helix hairpin bin"/>
    <property type="match status" value="2"/>
</dbReference>
<dbReference type="HAMAP" id="MF_01304">
    <property type="entry name" value="UPF0194"/>
    <property type="match status" value="1"/>
</dbReference>
<dbReference type="InterPro" id="IPR032317">
    <property type="entry name" value="CusB_D23"/>
</dbReference>
<dbReference type="InterPro" id="IPR022936">
    <property type="entry name" value="UPF0194_membrane_YbhG"/>
</dbReference>
<dbReference type="InterPro" id="IPR050465">
    <property type="entry name" value="UPF0194_transport"/>
</dbReference>
<dbReference type="NCBIfam" id="NF002939">
    <property type="entry name" value="PRK03598.1"/>
    <property type="match status" value="1"/>
</dbReference>
<dbReference type="PANTHER" id="PTHR32347">
    <property type="entry name" value="EFFLUX SYSTEM COMPONENT YKNX-RELATED"/>
    <property type="match status" value="1"/>
</dbReference>
<dbReference type="PANTHER" id="PTHR32347:SF29">
    <property type="entry name" value="UPF0194 MEMBRANE PROTEIN YBHG"/>
    <property type="match status" value="1"/>
</dbReference>
<dbReference type="Pfam" id="PF16576">
    <property type="entry name" value="HlyD_D23"/>
    <property type="match status" value="1"/>
</dbReference>
<dbReference type="SUPFAM" id="SSF111369">
    <property type="entry name" value="HlyD-like secretion proteins"/>
    <property type="match status" value="3"/>
</dbReference>
<comment type="subcellular location">
    <subcellularLocation>
        <location evidence="2">Periplasm</location>
    </subcellularLocation>
</comment>
<comment type="similarity">
    <text evidence="2">Belongs to the UPF0194 family.</text>
</comment>
<keyword id="KW-0175">Coiled coil</keyword>
<keyword id="KW-0574">Periplasm</keyword>
<keyword id="KW-1185">Reference proteome</keyword>
<keyword id="KW-0732">Signal</keyword>
<accession>Q3Z3Z0</accession>
<protein>
    <recommendedName>
        <fullName>UPF0194 membrane protein YbhG</fullName>
    </recommendedName>
</protein>
<proteinExistence type="inferred from homology"/>
<reference key="1">
    <citation type="journal article" date="2005" name="Nucleic Acids Res.">
        <title>Genome dynamics and diversity of Shigella species, the etiologic agents of bacillary dysentery.</title>
        <authorList>
            <person name="Yang F."/>
            <person name="Yang J."/>
            <person name="Zhang X."/>
            <person name="Chen L."/>
            <person name="Jiang Y."/>
            <person name="Yan Y."/>
            <person name="Tang X."/>
            <person name="Wang J."/>
            <person name="Xiong Z."/>
            <person name="Dong J."/>
            <person name="Xue Y."/>
            <person name="Zhu Y."/>
            <person name="Xu X."/>
            <person name="Sun L."/>
            <person name="Chen S."/>
            <person name="Nie H."/>
            <person name="Peng J."/>
            <person name="Xu J."/>
            <person name="Wang Y."/>
            <person name="Yuan Z."/>
            <person name="Wen Y."/>
            <person name="Yao Z."/>
            <person name="Shen Y."/>
            <person name="Qiang B."/>
            <person name="Hou Y."/>
            <person name="Yu J."/>
            <person name="Jin Q."/>
        </authorList>
    </citation>
    <scope>NUCLEOTIDE SEQUENCE [LARGE SCALE GENOMIC DNA]</scope>
    <source>
        <strain>Ss046</strain>
    </source>
</reference>
<name>YBHG_SHISS</name>
<organism>
    <name type="scientific">Shigella sonnei (strain Ss046)</name>
    <dbReference type="NCBI Taxonomy" id="300269"/>
    <lineage>
        <taxon>Bacteria</taxon>
        <taxon>Pseudomonadati</taxon>
        <taxon>Pseudomonadota</taxon>
        <taxon>Gammaproteobacteria</taxon>
        <taxon>Enterobacterales</taxon>
        <taxon>Enterobacteriaceae</taxon>
        <taxon>Shigella</taxon>
    </lineage>
</organism>
<gene>
    <name type="primary">ybhG</name>
    <name type="ordered locus">SSON_0774</name>
</gene>
<feature type="signal peptide" evidence="1">
    <location>
        <begin position="1"/>
        <end position="26"/>
    </location>
</feature>
<feature type="chain" id="PRO_0000322049" description="UPF0194 membrane protein YbhG">
    <location>
        <begin position="27"/>
        <end position="332"/>
    </location>
</feature>
<feature type="coiled-coil region" evidence="1">
    <location>
        <begin position="108"/>
        <end position="209"/>
    </location>
</feature>